<accession>A4QJJ8</accession>
<sequence>MALRFPRFSQGLAQDPTTRRIWFGIATAHDFESHDDITEERLYQNIFASHFGQLAIIFLWTSGNLFHVAWQGNFETWVQDPLHVRPIAHAIWDPHFGQPAVEAFTRGGALGPVNIAYSGVYQWWYTIGLRTNEDLYTGALFLLFLSAISLIGGWLHLQPKWKPRVSWFKNAESRLNHHLSGLFGVSSLAWTGHLVHVAIPASRGEYVRWNNFLNVLPHPQGLGPLFTGQWNLYAQNPDSSSHLFGTSQGSGTAILTLLGGFHPQTQSLWLTDIAHHHLAIAILFLIAGHMYRTNFGIGHSIKDLLEAHIPPGGRLGRGHKGLYDTINNSIHFQLGLALASLGVITSLVAQHMYSLPAYAFIAQDFTTQAALYTHHQYIAGFIMTGAFAHGAIFFIRDYNPEQNEDNVLARMLDHKEAIISHLSWASLFLGFHTLGLYVHNDVMLAFGTPEKQILIEPIFAQWIQSAHGKTSYGFDVLLSSTNGPAFNAGRSIWLPGWLNAINENSNSLFLTIGPGDFLVHHAIALGLHTTTLILVKGALDARGSKLMPDKKDFGYSFPCDGPGRGGTCDISAWDAFYLAVFWMLNTIGWVTFYWHWKHITLWQGNVSQFNESSTYLMGWLRDYLWLNSSQLINGYNPFGMNSLSVWAWMFLFGHLVWATGFMFLISWRGYWQELIETLAWAHERTPLANLIRWKDKPVALSIVQARLVGLAHFSVGYIFTYAAFLIASTSGKFG</sequence>
<geneLocation type="chloroplast"/>
<feature type="chain" id="PRO_0000300032" description="Photosystem I P700 chlorophyll a apoprotein A2">
    <location>
        <begin position="1"/>
        <end position="734"/>
    </location>
</feature>
<feature type="transmembrane region" description="Helical; Name=I" evidence="1">
    <location>
        <begin position="46"/>
        <end position="69"/>
    </location>
</feature>
<feature type="transmembrane region" description="Helical; Name=II" evidence="1">
    <location>
        <begin position="135"/>
        <end position="158"/>
    </location>
</feature>
<feature type="transmembrane region" description="Helical; Name=III" evidence="1">
    <location>
        <begin position="175"/>
        <end position="199"/>
    </location>
</feature>
<feature type="transmembrane region" description="Helical; Name=IV" evidence="1">
    <location>
        <begin position="273"/>
        <end position="291"/>
    </location>
</feature>
<feature type="transmembrane region" description="Helical; Name=V" evidence="1">
    <location>
        <begin position="330"/>
        <end position="353"/>
    </location>
</feature>
<feature type="transmembrane region" description="Helical; Name=VI" evidence="1">
    <location>
        <begin position="369"/>
        <end position="395"/>
    </location>
</feature>
<feature type="transmembrane region" description="Helical; Name=VII" evidence="1">
    <location>
        <begin position="417"/>
        <end position="439"/>
    </location>
</feature>
<feature type="transmembrane region" description="Helical; Name=VIII" evidence="1">
    <location>
        <begin position="517"/>
        <end position="535"/>
    </location>
</feature>
<feature type="transmembrane region" description="Helical; Name=IX" evidence="1">
    <location>
        <begin position="575"/>
        <end position="596"/>
    </location>
</feature>
<feature type="transmembrane region" description="Helical; Name=X" evidence="1">
    <location>
        <begin position="643"/>
        <end position="665"/>
    </location>
</feature>
<feature type="transmembrane region" description="Helical; Name=XI" evidence="1">
    <location>
        <begin position="707"/>
        <end position="727"/>
    </location>
</feature>
<feature type="binding site" evidence="1">
    <location>
        <position position="559"/>
    </location>
    <ligand>
        <name>[4Fe-4S] cluster</name>
        <dbReference type="ChEBI" id="CHEBI:49883"/>
        <note>ligand shared between dimeric partners</note>
    </ligand>
</feature>
<feature type="binding site" evidence="1">
    <location>
        <position position="568"/>
    </location>
    <ligand>
        <name>[4Fe-4S] cluster</name>
        <dbReference type="ChEBI" id="CHEBI:49883"/>
        <note>ligand shared between dimeric partners</note>
    </ligand>
</feature>
<feature type="binding site" description="axial binding residue" evidence="1">
    <location>
        <position position="654"/>
    </location>
    <ligand>
        <name>chlorophyll a</name>
        <dbReference type="ChEBI" id="CHEBI:58416"/>
        <label>B1</label>
    </ligand>
    <ligandPart>
        <name>Mg</name>
        <dbReference type="ChEBI" id="CHEBI:25107"/>
    </ligandPart>
</feature>
<feature type="binding site" description="axial binding residue" evidence="1">
    <location>
        <position position="662"/>
    </location>
    <ligand>
        <name>chlorophyll a</name>
        <dbReference type="ChEBI" id="CHEBI:58416"/>
        <label>B3</label>
    </ligand>
    <ligandPart>
        <name>Mg</name>
        <dbReference type="ChEBI" id="CHEBI:25107"/>
    </ligandPart>
</feature>
<feature type="binding site" evidence="1">
    <location>
        <position position="670"/>
    </location>
    <ligand>
        <name>chlorophyll a</name>
        <dbReference type="ChEBI" id="CHEBI:58416"/>
        <label>B3</label>
    </ligand>
</feature>
<feature type="binding site" evidence="1">
    <location>
        <position position="671"/>
    </location>
    <ligand>
        <name>phylloquinone</name>
        <dbReference type="ChEBI" id="CHEBI:18067"/>
        <label>B</label>
    </ligand>
</feature>
<evidence type="ECO:0000255" key="1">
    <source>
        <dbReference type="HAMAP-Rule" id="MF_00482"/>
    </source>
</evidence>
<name>PSAB_AETGR</name>
<reference key="1">
    <citation type="submission" date="2007-03" db="EMBL/GenBank/DDBJ databases">
        <title>Sequencing analysis of Aethionema grandiflorum chloroplast DNA.</title>
        <authorList>
            <person name="Hosouchi T."/>
            <person name="Tsuruoka H."/>
            <person name="Kotani H."/>
        </authorList>
    </citation>
    <scope>NUCLEOTIDE SEQUENCE [LARGE SCALE GENOMIC DNA]</scope>
</reference>
<proteinExistence type="inferred from homology"/>
<protein>
    <recommendedName>
        <fullName evidence="1">Photosystem I P700 chlorophyll a apoprotein A2</fullName>
        <ecNumber evidence="1">1.97.1.12</ecNumber>
    </recommendedName>
    <alternativeName>
        <fullName evidence="1">PSI-B</fullName>
    </alternativeName>
    <alternativeName>
        <fullName evidence="1">PsaB</fullName>
    </alternativeName>
</protein>
<organism>
    <name type="scientific">Aethionema grandiflorum</name>
    <name type="common">Persian stone-cress</name>
    <dbReference type="NCBI Taxonomy" id="72657"/>
    <lineage>
        <taxon>Eukaryota</taxon>
        <taxon>Viridiplantae</taxon>
        <taxon>Streptophyta</taxon>
        <taxon>Embryophyta</taxon>
        <taxon>Tracheophyta</taxon>
        <taxon>Spermatophyta</taxon>
        <taxon>Magnoliopsida</taxon>
        <taxon>eudicotyledons</taxon>
        <taxon>Gunneridae</taxon>
        <taxon>Pentapetalae</taxon>
        <taxon>rosids</taxon>
        <taxon>malvids</taxon>
        <taxon>Brassicales</taxon>
        <taxon>Brassicaceae</taxon>
        <taxon>Aethionemeae</taxon>
        <taxon>Aethionema</taxon>
    </lineage>
</organism>
<keyword id="KW-0004">4Fe-4S</keyword>
<keyword id="KW-0148">Chlorophyll</keyword>
<keyword id="KW-0150">Chloroplast</keyword>
<keyword id="KW-0157">Chromophore</keyword>
<keyword id="KW-0249">Electron transport</keyword>
<keyword id="KW-0408">Iron</keyword>
<keyword id="KW-0411">Iron-sulfur</keyword>
<keyword id="KW-0460">Magnesium</keyword>
<keyword id="KW-0472">Membrane</keyword>
<keyword id="KW-0479">Metal-binding</keyword>
<keyword id="KW-0560">Oxidoreductase</keyword>
<keyword id="KW-0602">Photosynthesis</keyword>
<keyword id="KW-0603">Photosystem I</keyword>
<keyword id="KW-0934">Plastid</keyword>
<keyword id="KW-0793">Thylakoid</keyword>
<keyword id="KW-0812">Transmembrane</keyword>
<keyword id="KW-1133">Transmembrane helix</keyword>
<keyword id="KW-0813">Transport</keyword>
<gene>
    <name evidence="1" type="primary">psaB</name>
</gene>
<dbReference type="EC" id="1.97.1.12" evidence="1"/>
<dbReference type="EMBL" id="AP009367">
    <property type="protein sequence ID" value="BAF49853.1"/>
    <property type="molecule type" value="Genomic_DNA"/>
</dbReference>
<dbReference type="RefSeq" id="YP_001123029.1">
    <property type="nucleotide sequence ID" value="NC_009266.1"/>
</dbReference>
<dbReference type="SMR" id="A4QJJ8"/>
<dbReference type="GeneID" id="4962262"/>
<dbReference type="GO" id="GO:0009535">
    <property type="term" value="C:chloroplast thylakoid membrane"/>
    <property type="evidence" value="ECO:0007669"/>
    <property type="project" value="UniProtKB-SubCell"/>
</dbReference>
<dbReference type="GO" id="GO:0009522">
    <property type="term" value="C:photosystem I"/>
    <property type="evidence" value="ECO:0007669"/>
    <property type="project" value="UniProtKB-KW"/>
</dbReference>
<dbReference type="GO" id="GO:0051539">
    <property type="term" value="F:4 iron, 4 sulfur cluster binding"/>
    <property type="evidence" value="ECO:0007669"/>
    <property type="project" value="UniProtKB-KW"/>
</dbReference>
<dbReference type="GO" id="GO:0016168">
    <property type="term" value="F:chlorophyll binding"/>
    <property type="evidence" value="ECO:0007669"/>
    <property type="project" value="UniProtKB-KW"/>
</dbReference>
<dbReference type="GO" id="GO:0009055">
    <property type="term" value="F:electron transfer activity"/>
    <property type="evidence" value="ECO:0007669"/>
    <property type="project" value="UniProtKB-UniRule"/>
</dbReference>
<dbReference type="GO" id="GO:0000287">
    <property type="term" value="F:magnesium ion binding"/>
    <property type="evidence" value="ECO:0007669"/>
    <property type="project" value="UniProtKB-UniRule"/>
</dbReference>
<dbReference type="GO" id="GO:0016491">
    <property type="term" value="F:oxidoreductase activity"/>
    <property type="evidence" value="ECO:0007669"/>
    <property type="project" value="UniProtKB-KW"/>
</dbReference>
<dbReference type="GO" id="GO:0015979">
    <property type="term" value="P:photosynthesis"/>
    <property type="evidence" value="ECO:0007669"/>
    <property type="project" value="UniProtKB-UniRule"/>
</dbReference>
<dbReference type="FunFam" id="1.20.1130.10:FF:000001">
    <property type="entry name" value="Photosystem I P700 chlorophyll a apoprotein A2"/>
    <property type="match status" value="1"/>
</dbReference>
<dbReference type="Gene3D" id="1.20.1130.10">
    <property type="entry name" value="Photosystem I PsaA/PsaB"/>
    <property type="match status" value="1"/>
</dbReference>
<dbReference type="HAMAP" id="MF_00482">
    <property type="entry name" value="PSI_PsaB"/>
    <property type="match status" value="1"/>
</dbReference>
<dbReference type="InterPro" id="IPR001280">
    <property type="entry name" value="PSI_PsaA/B"/>
</dbReference>
<dbReference type="InterPro" id="IPR020586">
    <property type="entry name" value="PSI_PsaA/B_CS"/>
</dbReference>
<dbReference type="InterPro" id="IPR036408">
    <property type="entry name" value="PSI_PsaA/B_sf"/>
</dbReference>
<dbReference type="InterPro" id="IPR006244">
    <property type="entry name" value="PSI_PsaB"/>
</dbReference>
<dbReference type="NCBIfam" id="TIGR01336">
    <property type="entry name" value="psaB"/>
    <property type="match status" value="1"/>
</dbReference>
<dbReference type="PANTHER" id="PTHR30128">
    <property type="entry name" value="OUTER MEMBRANE PROTEIN, OMPA-RELATED"/>
    <property type="match status" value="1"/>
</dbReference>
<dbReference type="PANTHER" id="PTHR30128:SF19">
    <property type="entry name" value="PHOTOSYSTEM I P700 CHLOROPHYLL A APOPROTEIN A1-RELATED"/>
    <property type="match status" value="1"/>
</dbReference>
<dbReference type="Pfam" id="PF00223">
    <property type="entry name" value="PsaA_PsaB"/>
    <property type="match status" value="1"/>
</dbReference>
<dbReference type="PIRSF" id="PIRSF002905">
    <property type="entry name" value="PSI_A"/>
    <property type="match status" value="1"/>
</dbReference>
<dbReference type="PRINTS" id="PR00257">
    <property type="entry name" value="PHOTSYSPSAAB"/>
</dbReference>
<dbReference type="SUPFAM" id="SSF81558">
    <property type="entry name" value="Photosystem I subunits PsaA/PsaB"/>
    <property type="match status" value="1"/>
</dbReference>
<dbReference type="PROSITE" id="PS00419">
    <property type="entry name" value="PHOTOSYSTEM_I_PSAAB"/>
    <property type="match status" value="1"/>
</dbReference>
<comment type="function">
    <text evidence="1">PsaA and PsaB bind P700, the primary electron donor of photosystem I (PSI), as well as the electron acceptors A0, A1 and FX. PSI is a plastocyanin-ferredoxin oxidoreductase, converting photonic excitation into a charge separation, which transfers an electron from the donor P700 chlorophyll pair to the spectroscopically characterized acceptors A0, A1, FX, FA and FB in turn. Oxidized P700 is reduced on the lumenal side of the thylakoid membrane by plastocyanin.</text>
</comment>
<comment type="catalytic activity">
    <reaction evidence="1">
        <text>reduced [plastocyanin] + hnu + oxidized [2Fe-2S]-[ferredoxin] = oxidized [plastocyanin] + reduced [2Fe-2S]-[ferredoxin]</text>
        <dbReference type="Rhea" id="RHEA:30407"/>
        <dbReference type="Rhea" id="RHEA-COMP:10000"/>
        <dbReference type="Rhea" id="RHEA-COMP:10001"/>
        <dbReference type="Rhea" id="RHEA-COMP:10039"/>
        <dbReference type="Rhea" id="RHEA-COMP:10040"/>
        <dbReference type="ChEBI" id="CHEBI:29036"/>
        <dbReference type="ChEBI" id="CHEBI:30212"/>
        <dbReference type="ChEBI" id="CHEBI:33737"/>
        <dbReference type="ChEBI" id="CHEBI:33738"/>
        <dbReference type="ChEBI" id="CHEBI:49552"/>
        <dbReference type="EC" id="1.97.1.12"/>
    </reaction>
</comment>
<comment type="cofactor">
    <text evidence="1">P700 is a chlorophyll a/chlorophyll a' dimer, A0 is one or more chlorophyll a, A1 is one or both phylloquinones and FX is a shared 4Fe-4S iron-sulfur center.</text>
</comment>
<comment type="subunit">
    <text evidence="1">The PsaA/B heterodimer binds the P700 chlorophyll special pair and subsequent electron acceptors. PSI consists of a core antenna complex that captures photons, and an electron transfer chain that converts photonic excitation into a charge separation. The eukaryotic PSI reaction center is composed of at least 11 subunits.</text>
</comment>
<comment type="subcellular location">
    <subcellularLocation>
        <location evidence="1">Plastid</location>
        <location evidence="1">Chloroplast thylakoid membrane</location>
        <topology evidence="1">Multi-pass membrane protein</topology>
    </subcellularLocation>
</comment>
<comment type="similarity">
    <text evidence="1">Belongs to the PsaA/PsaB family.</text>
</comment>